<dbReference type="EMBL" id="U66499">
    <property type="protein sequence ID" value="AAB06770.1"/>
    <property type="molecule type" value="Genomic_DNA"/>
</dbReference>
<dbReference type="SMR" id="Q95727"/>
<dbReference type="GO" id="GO:0005743">
    <property type="term" value="C:mitochondrial inner membrane"/>
    <property type="evidence" value="ECO:0007669"/>
    <property type="project" value="UniProtKB-SubCell"/>
</dbReference>
<dbReference type="GO" id="GO:0045275">
    <property type="term" value="C:respiratory chain complex III"/>
    <property type="evidence" value="ECO:0007669"/>
    <property type="project" value="InterPro"/>
</dbReference>
<dbReference type="GO" id="GO:0046872">
    <property type="term" value="F:metal ion binding"/>
    <property type="evidence" value="ECO:0007669"/>
    <property type="project" value="UniProtKB-KW"/>
</dbReference>
<dbReference type="GO" id="GO:0008121">
    <property type="term" value="F:ubiquinol-cytochrome-c reductase activity"/>
    <property type="evidence" value="ECO:0007669"/>
    <property type="project" value="InterPro"/>
</dbReference>
<dbReference type="GO" id="GO:0006122">
    <property type="term" value="P:mitochondrial electron transport, ubiquinol to cytochrome c"/>
    <property type="evidence" value="ECO:0007669"/>
    <property type="project" value="TreeGrafter"/>
</dbReference>
<dbReference type="CDD" id="cd00290">
    <property type="entry name" value="cytochrome_b_C"/>
    <property type="match status" value="1"/>
</dbReference>
<dbReference type="CDD" id="cd00284">
    <property type="entry name" value="Cytochrome_b_N"/>
    <property type="match status" value="1"/>
</dbReference>
<dbReference type="FunFam" id="1.20.810.10:FF:000002">
    <property type="entry name" value="Cytochrome b"/>
    <property type="match status" value="1"/>
</dbReference>
<dbReference type="Gene3D" id="1.20.810.10">
    <property type="entry name" value="Cytochrome Bc1 Complex, Chain C"/>
    <property type="match status" value="1"/>
</dbReference>
<dbReference type="InterPro" id="IPR005798">
    <property type="entry name" value="Cyt_b/b6_C"/>
</dbReference>
<dbReference type="InterPro" id="IPR036150">
    <property type="entry name" value="Cyt_b/b6_C_sf"/>
</dbReference>
<dbReference type="InterPro" id="IPR005797">
    <property type="entry name" value="Cyt_b/b6_N"/>
</dbReference>
<dbReference type="InterPro" id="IPR027387">
    <property type="entry name" value="Cytb/b6-like_sf"/>
</dbReference>
<dbReference type="InterPro" id="IPR030689">
    <property type="entry name" value="Cytochrome_b"/>
</dbReference>
<dbReference type="InterPro" id="IPR048260">
    <property type="entry name" value="Cytochrome_b_C_euk/bac"/>
</dbReference>
<dbReference type="InterPro" id="IPR048259">
    <property type="entry name" value="Cytochrome_b_N_euk/bac"/>
</dbReference>
<dbReference type="InterPro" id="IPR016174">
    <property type="entry name" value="Di-haem_cyt_TM"/>
</dbReference>
<dbReference type="PANTHER" id="PTHR19271">
    <property type="entry name" value="CYTOCHROME B"/>
    <property type="match status" value="1"/>
</dbReference>
<dbReference type="PANTHER" id="PTHR19271:SF16">
    <property type="entry name" value="CYTOCHROME B"/>
    <property type="match status" value="1"/>
</dbReference>
<dbReference type="Pfam" id="PF00032">
    <property type="entry name" value="Cytochrom_B_C"/>
    <property type="match status" value="1"/>
</dbReference>
<dbReference type="Pfam" id="PF00033">
    <property type="entry name" value="Cytochrome_B"/>
    <property type="match status" value="1"/>
</dbReference>
<dbReference type="PIRSF" id="PIRSF038885">
    <property type="entry name" value="COB"/>
    <property type="match status" value="1"/>
</dbReference>
<dbReference type="SUPFAM" id="SSF81648">
    <property type="entry name" value="a domain/subunit of cytochrome bc1 complex (Ubiquinol-cytochrome c reductase)"/>
    <property type="match status" value="1"/>
</dbReference>
<dbReference type="SUPFAM" id="SSF81342">
    <property type="entry name" value="Transmembrane di-heme cytochromes"/>
    <property type="match status" value="1"/>
</dbReference>
<dbReference type="PROSITE" id="PS51003">
    <property type="entry name" value="CYTB_CTER"/>
    <property type="match status" value="1"/>
</dbReference>
<dbReference type="PROSITE" id="PS51002">
    <property type="entry name" value="CYTB_NTER"/>
    <property type="match status" value="1"/>
</dbReference>
<proteinExistence type="inferred from homology"/>
<gene>
    <name type="primary">MT-CYB</name>
    <name type="synonym">COB</name>
    <name type="synonym">CYTB</name>
    <name type="synonym">MTCYB</name>
</gene>
<accession>Q95727</accession>
<feature type="chain" id="PRO_0000060627" description="Cytochrome b">
    <location>
        <begin position="1"/>
        <end position="379"/>
    </location>
</feature>
<feature type="transmembrane region" description="Helical" evidence="2">
    <location>
        <begin position="33"/>
        <end position="53"/>
    </location>
</feature>
<feature type="transmembrane region" description="Helical" evidence="2">
    <location>
        <begin position="77"/>
        <end position="98"/>
    </location>
</feature>
<feature type="transmembrane region" description="Helical" evidence="2">
    <location>
        <begin position="113"/>
        <end position="133"/>
    </location>
</feature>
<feature type="transmembrane region" description="Helical" evidence="2">
    <location>
        <begin position="178"/>
        <end position="198"/>
    </location>
</feature>
<feature type="transmembrane region" description="Helical" evidence="2">
    <location>
        <begin position="226"/>
        <end position="246"/>
    </location>
</feature>
<feature type="transmembrane region" description="Helical" evidence="2">
    <location>
        <begin position="288"/>
        <end position="308"/>
    </location>
</feature>
<feature type="transmembrane region" description="Helical" evidence="2">
    <location>
        <begin position="320"/>
        <end position="340"/>
    </location>
</feature>
<feature type="transmembrane region" description="Helical" evidence="2">
    <location>
        <begin position="347"/>
        <end position="367"/>
    </location>
</feature>
<feature type="binding site" description="axial binding residue" evidence="2">
    <location>
        <position position="83"/>
    </location>
    <ligand>
        <name>heme b</name>
        <dbReference type="ChEBI" id="CHEBI:60344"/>
        <label>b562</label>
    </ligand>
    <ligandPart>
        <name>Fe</name>
        <dbReference type="ChEBI" id="CHEBI:18248"/>
    </ligandPart>
</feature>
<feature type="binding site" description="axial binding residue" evidence="2">
    <location>
        <position position="97"/>
    </location>
    <ligand>
        <name>heme b</name>
        <dbReference type="ChEBI" id="CHEBI:60344"/>
        <label>b566</label>
    </ligand>
    <ligandPart>
        <name>Fe</name>
        <dbReference type="ChEBI" id="CHEBI:18248"/>
    </ligandPart>
</feature>
<feature type="binding site" description="axial binding residue" evidence="2">
    <location>
        <position position="182"/>
    </location>
    <ligand>
        <name>heme b</name>
        <dbReference type="ChEBI" id="CHEBI:60344"/>
        <label>b562</label>
    </ligand>
    <ligandPart>
        <name>Fe</name>
        <dbReference type="ChEBI" id="CHEBI:18248"/>
    </ligandPart>
</feature>
<feature type="binding site" description="axial binding residue" evidence="2">
    <location>
        <position position="196"/>
    </location>
    <ligand>
        <name>heme b</name>
        <dbReference type="ChEBI" id="CHEBI:60344"/>
        <label>b566</label>
    </ligand>
    <ligandPart>
        <name>Fe</name>
        <dbReference type="ChEBI" id="CHEBI:18248"/>
    </ligandPart>
</feature>
<feature type="binding site" evidence="2">
    <location>
        <position position="201"/>
    </location>
    <ligand>
        <name>a ubiquinone</name>
        <dbReference type="ChEBI" id="CHEBI:16389"/>
    </ligand>
</feature>
<sequence length="379" mass="42819">MTNIRKTHPLLKIINSSFVDLPAPSSLSSWWNFGPFLGVCLGVQILTGLFLAMHYTSDTATAFNSVTHICRDVNYGWLLRYLHANGASMFFICLYLHVGRGLYYGSYTYSETWNIGILLLFAVMATAFMGYVLPWGQMSFWGATVITNLLSAIPYIGTDLVQWIWGGFSVDKATLTRFFAFHFLLPFIVTALVMVHLLFLHETGSNNPTGIPSDPDMIPFHPYYTIKDILGFLVMLTALATLVLFSPDLLGDPDNYIPANPLMTPPHIKPEWYFLFAYAILRSIPNKLGGVLALVMSILILAIVPILHMSKQRSMMFRPFSQCLFWLLVAVLFTLTWIGGQPVEHPYIIIGQTASVLYFLIILFLMPMISLVENYLLKW</sequence>
<geneLocation type="mitochondrion"/>
<evidence type="ECO:0000250" key="1"/>
<evidence type="ECO:0000250" key="2">
    <source>
        <dbReference type="UniProtKB" id="P00157"/>
    </source>
</evidence>
<evidence type="ECO:0000255" key="3">
    <source>
        <dbReference type="PROSITE-ProRule" id="PRU00967"/>
    </source>
</evidence>
<evidence type="ECO:0000255" key="4">
    <source>
        <dbReference type="PROSITE-ProRule" id="PRU00968"/>
    </source>
</evidence>
<comment type="function">
    <text evidence="2">Component of the ubiquinol-cytochrome c reductase complex (complex III or cytochrome b-c1 complex) that is part of the mitochondrial respiratory chain. The b-c1 complex mediates electron transfer from ubiquinol to cytochrome c. Contributes to the generation of a proton gradient across the mitochondrial membrane that is then used for ATP synthesis.</text>
</comment>
<comment type="cofactor">
    <cofactor evidence="2">
        <name>heme b</name>
        <dbReference type="ChEBI" id="CHEBI:60344"/>
    </cofactor>
    <text evidence="2">Binds 2 heme b groups non-covalently.</text>
</comment>
<comment type="subunit">
    <text evidence="2">The cytochrome bc1 complex contains 11 subunits: 3 respiratory subunits (MT-CYB, CYC1 and UQCRFS1), 2 core proteins (UQCRC1 and UQCRC2) and 6 low-molecular weight proteins (UQCRH/QCR6, UQCRB/QCR7, UQCRQ/QCR8, UQCR10/QCR9, UQCR11/QCR10 and a cleavage product of UQCRFS1). This cytochrome bc1 complex then forms a dimer.</text>
</comment>
<comment type="subcellular location">
    <subcellularLocation>
        <location evidence="2">Mitochondrion inner membrane</location>
        <topology evidence="2">Multi-pass membrane protein</topology>
    </subcellularLocation>
</comment>
<comment type="miscellaneous">
    <text evidence="1">Heme 1 (or BL or b562) is low-potential and absorbs at about 562 nm, and heme 2 (or BH or b566) is high-potential and absorbs at about 566 nm.</text>
</comment>
<comment type="similarity">
    <text evidence="3 4">Belongs to the cytochrome b family.</text>
</comment>
<comment type="caution">
    <text evidence="2">The full-length protein contains only eight transmembrane helices, not nine as predicted by bioinformatics tools.</text>
</comment>
<name>CYB_ARTFR</name>
<keyword id="KW-0249">Electron transport</keyword>
<keyword id="KW-0349">Heme</keyword>
<keyword id="KW-0408">Iron</keyword>
<keyword id="KW-0472">Membrane</keyword>
<keyword id="KW-0479">Metal-binding</keyword>
<keyword id="KW-0496">Mitochondrion</keyword>
<keyword id="KW-0999">Mitochondrion inner membrane</keyword>
<keyword id="KW-0679">Respiratory chain</keyword>
<keyword id="KW-0812">Transmembrane</keyword>
<keyword id="KW-1133">Transmembrane helix</keyword>
<keyword id="KW-0813">Transport</keyword>
<keyword id="KW-0830">Ubiquinone</keyword>
<organism>
    <name type="scientific">Artibeus fraterculus</name>
    <name type="common">Fraternal fruit-eating bat</name>
    <dbReference type="NCBI Taxonomy" id="51011"/>
    <lineage>
        <taxon>Eukaryota</taxon>
        <taxon>Metazoa</taxon>
        <taxon>Chordata</taxon>
        <taxon>Craniata</taxon>
        <taxon>Vertebrata</taxon>
        <taxon>Euteleostomi</taxon>
        <taxon>Mammalia</taxon>
        <taxon>Eutheria</taxon>
        <taxon>Laurasiatheria</taxon>
        <taxon>Chiroptera</taxon>
        <taxon>Yangochiroptera</taxon>
        <taxon>Phyllostomidae</taxon>
        <taxon>Stenodermatinae</taxon>
        <taxon>Artibeus</taxon>
    </lineage>
</organism>
<reference key="1">
    <citation type="submission" date="1996-08" db="EMBL/GenBank/DDBJ databases">
        <title>Phylogenetic accuracy, stability, and congruence: relationships within and among the New World bat genera Artibeus, Dermanura, and Koopmania.</title>
        <authorList>
            <person name="den Bussche R.A."/>
            <person name="Hudgeons J.L."/>
            <person name="Baker R.J."/>
        </authorList>
    </citation>
    <scope>NUCLEOTIDE SEQUENCE [GENOMIC DNA]</scope>
    <source>
        <strain>Isolate TK 16631</strain>
    </source>
</reference>
<protein>
    <recommendedName>
        <fullName>Cytochrome b</fullName>
    </recommendedName>
    <alternativeName>
        <fullName>Complex III subunit 3</fullName>
    </alternativeName>
    <alternativeName>
        <fullName>Complex III subunit III</fullName>
    </alternativeName>
    <alternativeName>
        <fullName>Cytochrome b-c1 complex subunit 3</fullName>
    </alternativeName>
    <alternativeName>
        <fullName>Ubiquinol-cytochrome-c reductase complex cytochrome b subunit</fullName>
    </alternativeName>
</protein>